<protein>
    <recommendedName>
        <fullName>Arylphorin subunit beta</fullName>
    </recommendedName>
</protein>
<feature type="signal peptide">
    <location>
        <begin position="1"/>
        <end position="16"/>
    </location>
</feature>
<feature type="chain" id="PRO_0000013330" description="Arylphorin subunit beta">
    <location>
        <begin position="17"/>
        <end position="703"/>
    </location>
</feature>
<feature type="glycosylation site" description="N-linked (GlcNAc...) asparagine" evidence="1">
    <location>
        <position position="72"/>
    </location>
</feature>
<feature type="glycosylation site" description="N-linked (GlcNAc...) asparagine" evidence="1">
    <location>
        <position position="211"/>
    </location>
</feature>
<dbReference type="EMBL" id="M28395">
    <property type="protein sequence ID" value="AAA29304.1"/>
    <property type="molecule type" value="Genomic_DNA"/>
</dbReference>
<dbReference type="EMBL" id="M28397">
    <property type="protein sequence ID" value="AAA29305.1"/>
    <property type="molecule type" value="mRNA"/>
</dbReference>
<dbReference type="PIR" id="B34434">
    <property type="entry name" value="B34434"/>
</dbReference>
<dbReference type="SMR" id="P14297"/>
<dbReference type="OrthoDB" id="6371642at2759"/>
<dbReference type="GO" id="GO:0005576">
    <property type="term" value="C:extracellular region"/>
    <property type="evidence" value="ECO:0007669"/>
    <property type="project" value="UniProtKB-SubCell"/>
</dbReference>
<dbReference type="GO" id="GO:0045735">
    <property type="term" value="F:nutrient reservoir activity"/>
    <property type="evidence" value="ECO:0007669"/>
    <property type="project" value="UniProtKB-KW"/>
</dbReference>
<dbReference type="Gene3D" id="1.10.1280.10">
    <property type="entry name" value="Di-copper center containing domain from catechol oxidase"/>
    <property type="match status" value="1"/>
</dbReference>
<dbReference type="Gene3D" id="2.60.40.1520">
    <property type="entry name" value="Hemocyanin, C-terminal domain"/>
    <property type="match status" value="1"/>
</dbReference>
<dbReference type="Gene3D" id="1.20.1370.10">
    <property type="entry name" value="Hemocyanin, N-terminal domain"/>
    <property type="match status" value="1"/>
</dbReference>
<dbReference type="InterPro" id="IPR008922">
    <property type="entry name" value="Di-copper_centre_dom_sf"/>
</dbReference>
<dbReference type="InterPro" id="IPR013788">
    <property type="entry name" value="Hemocyanin/hexamerin"/>
</dbReference>
<dbReference type="InterPro" id="IPR000896">
    <property type="entry name" value="Hemocyanin/hexamerin_mid_dom"/>
</dbReference>
<dbReference type="InterPro" id="IPR005203">
    <property type="entry name" value="Hemocyanin_C"/>
</dbReference>
<dbReference type="InterPro" id="IPR037020">
    <property type="entry name" value="Hemocyanin_C_sf"/>
</dbReference>
<dbReference type="InterPro" id="IPR005204">
    <property type="entry name" value="Hemocyanin_N"/>
</dbReference>
<dbReference type="InterPro" id="IPR036697">
    <property type="entry name" value="Hemocyanin_N_sf"/>
</dbReference>
<dbReference type="InterPro" id="IPR014756">
    <property type="entry name" value="Ig_E-set"/>
</dbReference>
<dbReference type="PANTHER" id="PTHR11511:SF5">
    <property type="entry name" value="FAT-BODY PROTEIN 1-RELATED"/>
    <property type="match status" value="1"/>
</dbReference>
<dbReference type="PANTHER" id="PTHR11511">
    <property type="entry name" value="LARVAL STORAGE PROTEIN/PHENOLOXIDASE"/>
    <property type="match status" value="1"/>
</dbReference>
<dbReference type="Pfam" id="PF03723">
    <property type="entry name" value="Hemocyanin_C"/>
    <property type="match status" value="1"/>
</dbReference>
<dbReference type="Pfam" id="PF00372">
    <property type="entry name" value="Hemocyanin_M"/>
    <property type="match status" value="1"/>
</dbReference>
<dbReference type="Pfam" id="PF03722">
    <property type="entry name" value="Hemocyanin_N"/>
    <property type="match status" value="1"/>
</dbReference>
<dbReference type="PRINTS" id="PR00187">
    <property type="entry name" value="HAEMOCYANIN"/>
</dbReference>
<dbReference type="SUPFAM" id="SSF48056">
    <property type="entry name" value="Di-copper centre-containing domain"/>
    <property type="match status" value="1"/>
</dbReference>
<dbReference type="SUPFAM" id="SSF81296">
    <property type="entry name" value="E set domains"/>
    <property type="match status" value="1"/>
</dbReference>
<dbReference type="SUPFAM" id="SSF48050">
    <property type="entry name" value="Hemocyanin, N-terminal domain"/>
    <property type="match status" value="1"/>
</dbReference>
<dbReference type="PROSITE" id="PS00209">
    <property type="entry name" value="HEMOCYANIN_1"/>
    <property type="match status" value="1"/>
</dbReference>
<dbReference type="PROSITE" id="PS00210">
    <property type="entry name" value="HEMOCYANIN_2"/>
    <property type="match status" value="1"/>
</dbReference>
<organism>
    <name type="scientific">Manduca sexta</name>
    <name type="common">Tobacco hawkmoth</name>
    <name type="synonym">Tobacco hornworm</name>
    <dbReference type="NCBI Taxonomy" id="7130"/>
    <lineage>
        <taxon>Eukaryota</taxon>
        <taxon>Metazoa</taxon>
        <taxon>Ecdysozoa</taxon>
        <taxon>Arthropoda</taxon>
        <taxon>Hexapoda</taxon>
        <taxon>Insecta</taxon>
        <taxon>Pterygota</taxon>
        <taxon>Neoptera</taxon>
        <taxon>Endopterygota</taxon>
        <taxon>Lepidoptera</taxon>
        <taxon>Glossata</taxon>
        <taxon>Ditrysia</taxon>
        <taxon>Bombycoidea</taxon>
        <taxon>Sphingidae</taxon>
        <taxon>Sphinginae</taxon>
        <taxon>Sphingini</taxon>
        <taxon>Manduca</taxon>
    </lineage>
</organism>
<sequence>MKTVIILAGLVALALGSEVPVKHSFKVKDVDAAFVERQKKVLDLFQDVDQVNPNDEYYKIGKEYNIEANIDNYSNKKAVEEFLQLYRTGFLPKYYEFSPFYDRLRDEAIGVFHLFYYAKDFDTFYKSAAWARVYLNEGQFLYAYYIAVIQRKDTQGFVVPAPYEVYPQFFANLNTMLKVYRTKMQDGVVSADLAAQHGIVKEKNYYVYYANYSNSLVYNNEEQRLSYFTEDIGLNSYYYYFHSHLPFWWNSERYGALKSRRGEIYYYFYQQLMARYYFERLSNGLGDIPEFSWYSPVKSGYYPLMSSYYYPFAQRPNYWNVHSEENYEKVRFLDTYEMSFLQFLQNGHFKAFDQKIDFHDFKAINFVGNYWQDNADLYGEEVTKDYQRSYEIIARQVLGAAPKPFDKYTFMPSALDFYQTSLRDPMFYQLYNRILKYIYEYKQYLQPYSSEKLAFKGVKVVDVVVDKLVTFFEYYDFDASNSVFWSKEEVKSSYPHDFKIRQPRLNHKPFSVSIDIKSEAAVDAVVKIFMAPKYDDNGFPLKLENNWNKFFELDWFTYKFVAGDNKIVRNSNDFLIFKDDSVPMTELYKLLEQNKVPHDMSEDYGYLPKRLMLPRGTEGGFPFQFFVFVYPFNADSKDLAPFEAFIQDNKPLGYPFDRPVVDAYFKQHNMFFKDVFVYHDGEYFPYKFNVPSHVMHSNVVPKH</sequence>
<name>ARYB_MANSE</name>
<evidence type="ECO:0000255" key="1"/>
<evidence type="ECO:0000305" key="2"/>
<accession>P14297</accession>
<reference key="1">
    <citation type="journal article" date="1989" name="J. Biol. Chem.">
        <title>cDNA and gene sequence of Manduca sexta arylphorin, an aromatic amino acid-rich larval serum protein. Homology to arthropod hemocyanins.</title>
        <authorList>
            <person name="Willott E."/>
            <person name="Wang X.-Y."/>
            <person name="Wells M.A."/>
        </authorList>
    </citation>
    <scope>NUCLEOTIDE SEQUENCE [GENOMIC DNA / MRNA]</scope>
    <source>
        <tissue>Larval fat body</tissue>
    </source>
</reference>
<proteinExistence type="evidence at transcript level"/>
<keyword id="KW-0325">Glycoprotein</keyword>
<keyword id="KW-0964">Secreted</keyword>
<keyword id="KW-0732">Signal</keyword>
<keyword id="KW-0758">Storage protein</keyword>
<comment type="function">
    <text>Arylphorin is a larval storage protein (LSP) which may serve as a storage protein used primarily as a source of aromatic amino acids for protein synthesis during metamorphosis. It is a constituent of the sclerotizing system of the cuticle, and serves as a carrier for ecdysteroid hormone.</text>
</comment>
<comment type="subunit">
    <text>Arylphorin is a hexamer of subunits alpha and beta.</text>
</comment>
<comment type="subcellular location">
    <subcellularLocation>
        <location>Secreted</location>
        <location>Extracellular space</location>
    </subcellularLocation>
</comment>
<comment type="tissue specificity">
    <text>Fat body.</text>
</comment>
<comment type="similarity">
    <text evidence="2">Belongs to the hemocyanin family.</text>
</comment>